<evidence type="ECO:0000250" key="1">
    <source>
        <dbReference type="UniProtKB" id="Q9JMJ2"/>
    </source>
</evidence>
<evidence type="ECO:0000255" key="2">
    <source>
        <dbReference type="PROSITE-ProRule" id="PRU00080"/>
    </source>
</evidence>
<evidence type="ECO:0000269" key="3">
    <source>
    </source>
</evidence>
<evidence type="ECO:0000269" key="4">
    <source>
    </source>
</evidence>
<evidence type="ECO:0000305" key="5"/>
<sequence length="412" mass="46337">MAAAAGEEEEEEEAARESAARPAAGPALWRLPEELLLLICSYLDMRALGRLAQVCRWLRRFTSCDLLWRRIARASLNSGFTRLGTDLMTSVPVKERVKVSQNWRLGRCREGILLKWRCSQMPWMQLEDDSLYISQANFILAYQFRPDGASLNRRPLGVFAGHDEDVCHFVLANSHIVSAGGDGKIGIHKIHSTFTVKYSAHEQEVNCVDCKGGIIVSGSRDRTAKVWPLASGRLGQCLHTIQTEDRVWSIAISPLLSSFVTGTACCGHFSPLRIWDLNSGQLMTHLGSDFPPGAGVLDVMYESPFTLLSCGYDTYVRYWDLRTSVRKCVMEWEEPHDSTLYCLQTDGNHLLATGSSYYGVVRLWDRRQRACLHAFPLTSTPLSSPVYCLRLTTKHLYAALSYNLHVLDFQNP</sequence>
<reference key="1">
    <citation type="journal article" date="1999" name="Biochem. Biophys. Res. Commun.">
        <title>A novel human gene encoding an F-box/WD40 containing protein maps in the SHFM3 critical region on 10q24.</title>
        <authorList>
            <person name="Ianakiev P."/>
            <person name="Kilpatrick M.W."/>
            <person name="Dealy C."/>
            <person name="Kosher R."/>
            <person name="Korenberg J.R."/>
            <person name="Chen X.N."/>
            <person name="Tsipouras P."/>
        </authorList>
    </citation>
    <scope>NUCLEOTIDE SEQUENCE [MRNA]</scope>
    <scope>TISSUE SPECIFICITY</scope>
</reference>
<reference key="2">
    <citation type="journal article" date="2000" name="Genomics">
        <title>cDNA cloning and expression analysis of new members of the mammalian F-box protein family.</title>
        <authorList>
            <person name="Ilyin G.P."/>
            <person name="Rialland M."/>
            <person name="Pigeon C."/>
            <person name="Guguen-Guillouzo C."/>
        </authorList>
    </citation>
    <scope>NUCLEOTIDE SEQUENCE [MRNA]</scope>
</reference>
<reference key="3">
    <citation type="journal article" date="2004" name="Nature">
        <title>The DNA sequence and comparative analysis of human chromosome 10.</title>
        <authorList>
            <person name="Deloukas P."/>
            <person name="Earthrowl M.E."/>
            <person name="Grafham D.V."/>
            <person name="Rubenfield M."/>
            <person name="French L."/>
            <person name="Steward C.A."/>
            <person name="Sims S.K."/>
            <person name="Jones M.C."/>
            <person name="Searle S."/>
            <person name="Scott C."/>
            <person name="Howe K."/>
            <person name="Hunt S.E."/>
            <person name="Andrews T.D."/>
            <person name="Gilbert J.G.R."/>
            <person name="Swarbreck D."/>
            <person name="Ashurst J.L."/>
            <person name="Taylor A."/>
            <person name="Battles J."/>
            <person name="Bird C.P."/>
            <person name="Ainscough R."/>
            <person name="Almeida J.P."/>
            <person name="Ashwell R.I.S."/>
            <person name="Ambrose K.D."/>
            <person name="Babbage A.K."/>
            <person name="Bagguley C.L."/>
            <person name="Bailey J."/>
            <person name="Banerjee R."/>
            <person name="Bates K."/>
            <person name="Beasley H."/>
            <person name="Bray-Allen S."/>
            <person name="Brown A.J."/>
            <person name="Brown J.Y."/>
            <person name="Burford D.C."/>
            <person name="Burrill W."/>
            <person name="Burton J."/>
            <person name="Cahill P."/>
            <person name="Camire D."/>
            <person name="Carter N.P."/>
            <person name="Chapman J.C."/>
            <person name="Clark S.Y."/>
            <person name="Clarke G."/>
            <person name="Clee C.M."/>
            <person name="Clegg S."/>
            <person name="Corby N."/>
            <person name="Coulson A."/>
            <person name="Dhami P."/>
            <person name="Dutta I."/>
            <person name="Dunn M."/>
            <person name="Faulkner L."/>
            <person name="Frankish A."/>
            <person name="Frankland J.A."/>
            <person name="Garner P."/>
            <person name="Garnett J."/>
            <person name="Gribble S."/>
            <person name="Griffiths C."/>
            <person name="Grocock R."/>
            <person name="Gustafson E."/>
            <person name="Hammond S."/>
            <person name="Harley J.L."/>
            <person name="Hart E."/>
            <person name="Heath P.D."/>
            <person name="Ho T.P."/>
            <person name="Hopkins B."/>
            <person name="Horne J."/>
            <person name="Howden P.J."/>
            <person name="Huckle E."/>
            <person name="Hynds C."/>
            <person name="Johnson C."/>
            <person name="Johnson D."/>
            <person name="Kana A."/>
            <person name="Kay M."/>
            <person name="Kimberley A.M."/>
            <person name="Kershaw J.K."/>
            <person name="Kokkinaki M."/>
            <person name="Laird G.K."/>
            <person name="Lawlor S."/>
            <person name="Lee H.M."/>
            <person name="Leongamornlert D.A."/>
            <person name="Laird G."/>
            <person name="Lloyd C."/>
            <person name="Lloyd D.M."/>
            <person name="Loveland J."/>
            <person name="Lovell J."/>
            <person name="McLaren S."/>
            <person name="McLay K.E."/>
            <person name="McMurray A."/>
            <person name="Mashreghi-Mohammadi M."/>
            <person name="Matthews L."/>
            <person name="Milne S."/>
            <person name="Nickerson T."/>
            <person name="Nguyen M."/>
            <person name="Overton-Larty E."/>
            <person name="Palmer S.A."/>
            <person name="Pearce A.V."/>
            <person name="Peck A.I."/>
            <person name="Pelan S."/>
            <person name="Phillimore B."/>
            <person name="Porter K."/>
            <person name="Rice C.M."/>
            <person name="Rogosin A."/>
            <person name="Ross M.T."/>
            <person name="Sarafidou T."/>
            <person name="Sehra H.K."/>
            <person name="Shownkeen R."/>
            <person name="Skuce C.D."/>
            <person name="Smith M."/>
            <person name="Standring L."/>
            <person name="Sycamore N."/>
            <person name="Tester J."/>
            <person name="Thorpe A."/>
            <person name="Torcasso W."/>
            <person name="Tracey A."/>
            <person name="Tromans A."/>
            <person name="Tsolas J."/>
            <person name="Wall M."/>
            <person name="Walsh J."/>
            <person name="Wang H."/>
            <person name="Weinstock K."/>
            <person name="West A.P."/>
            <person name="Willey D.L."/>
            <person name="Whitehead S.L."/>
            <person name="Wilming L."/>
            <person name="Wray P.W."/>
            <person name="Young L."/>
            <person name="Chen Y."/>
            <person name="Lovering R.C."/>
            <person name="Moschonas N.K."/>
            <person name="Siebert R."/>
            <person name="Fechtel K."/>
            <person name="Bentley D."/>
            <person name="Durbin R.M."/>
            <person name="Hubbard T."/>
            <person name="Doucette-Stamm L."/>
            <person name="Beck S."/>
            <person name="Smith D.R."/>
            <person name="Rogers J."/>
        </authorList>
    </citation>
    <scope>NUCLEOTIDE SEQUENCE [LARGE SCALE GENOMIC DNA]</scope>
</reference>
<reference key="4">
    <citation type="journal article" date="2004" name="Genome Res.">
        <title>The status, quality, and expansion of the NIH full-length cDNA project: the Mammalian Gene Collection (MGC).</title>
        <authorList>
            <consortium name="The MGC Project Team"/>
        </authorList>
    </citation>
    <scope>NUCLEOTIDE SEQUENCE [LARGE SCALE MRNA]</scope>
    <source>
        <tissue>Pancreas</tissue>
    </source>
</reference>
<reference key="5">
    <citation type="journal article" date="2003" name="Hum. Mol. Genet.">
        <title>A genomic rearrangement resulting in a tandem duplication is associated with split hand-split foot malformation 3 (SHFM3) at 10q24.</title>
        <authorList>
            <person name="de Mollerat X.J."/>
            <person name="Gurrieri F."/>
            <person name="Morgan C.T."/>
            <person name="Sangiorgi E."/>
            <person name="Everman D.B."/>
            <person name="Gaspari P."/>
            <person name="Amiel J."/>
            <person name="Bamshad M.J."/>
            <person name="Lyle R."/>
            <person name="Blouin J.-L."/>
            <person name="Allanson J.E."/>
            <person name="Le Marec B."/>
            <person name="Wilson M."/>
            <person name="Braverman N.E."/>
            <person name="Radhakrishna U."/>
            <person name="Delozier-Blanchet C."/>
            <person name="Abbott A."/>
            <person name="Elghouzzi V."/>
            <person name="Antonarakis S.E."/>
            <person name="Stevenson R.E."/>
            <person name="Munnich A."/>
            <person name="Neri G."/>
            <person name="Schwartz C.E."/>
        </authorList>
    </citation>
    <scope>INVOLVEMENT IN SHFM3</scope>
</reference>
<name>FBXW4_HUMAN</name>
<organism>
    <name type="scientific">Homo sapiens</name>
    <name type="common">Human</name>
    <dbReference type="NCBI Taxonomy" id="9606"/>
    <lineage>
        <taxon>Eukaryota</taxon>
        <taxon>Metazoa</taxon>
        <taxon>Chordata</taxon>
        <taxon>Craniata</taxon>
        <taxon>Vertebrata</taxon>
        <taxon>Euteleostomi</taxon>
        <taxon>Mammalia</taxon>
        <taxon>Eutheria</taxon>
        <taxon>Euarchontoglires</taxon>
        <taxon>Primates</taxon>
        <taxon>Haplorrhini</taxon>
        <taxon>Catarrhini</taxon>
        <taxon>Hominidae</taxon>
        <taxon>Homo</taxon>
    </lineage>
</organism>
<gene>
    <name type="primary">FBXW4</name>
    <name type="synonym">FBW4</name>
    <name type="synonym">SHFM3</name>
</gene>
<feature type="chain" id="PRO_0000050990" description="F-box/WD repeat-containing protein 4">
    <location>
        <begin position="1"/>
        <end position="412"/>
    </location>
</feature>
<feature type="domain" description="F-box" evidence="2">
    <location>
        <begin position="25"/>
        <end position="71"/>
    </location>
</feature>
<feature type="repeat" description="WD 1">
    <location>
        <begin position="154"/>
        <end position="190"/>
    </location>
</feature>
<feature type="repeat" description="WD 2">
    <location>
        <begin position="193"/>
        <end position="229"/>
    </location>
</feature>
<feature type="repeat" description="WD 3">
    <location>
        <begin position="236"/>
        <end position="277"/>
    </location>
</feature>
<feature type="repeat" description="WD 4">
    <location>
        <begin position="283"/>
        <end position="321"/>
    </location>
</feature>
<feature type="repeat" description="WD 5">
    <location>
        <begin position="327"/>
        <end position="366"/>
    </location>
</feature>
<feature type="repeat" description="WD 6">
    <location>
        <begin position="373"/>
        <end position="409"/>
    </location>
</feature>
<feature type="sequence conflict" description="In Ref. 4; AAH07380." evidence="5" ref="4">
    <original>L</original>
    <variation>P</variation>
    <location>
        <position position="363"/>
    </location>
</feature>
<dbReference type="EMBL" id="AF281859">
    <property type="protein sequence ID" value="AAG22739.1"/>
    <property type="molecule type" value="mRNA"/>
</dbReference>
<dbReference type="EMBL" id="AC010789">
    <property type="status" value="NOT_ANNOTATED_CDS"/>
    <property type="molecule type" value="Genomic_DNA"/>
</dbReference>
<dbReference type="EMBL" id="AL627144">
    <property type="status" value="NOT_ANNOTATED_CDS"/>
    <property type="molecule type" value="Genomic_DNA"/>
</dbReference>
<dbReference type="EMBL" id="AL627424">
    <property type="status" value="NOT_ANNOTATED_CDS"/>
    <property type="molecule type" value="Genomic_DNA"/>
</dbReference>
<dbReference type="EMBL" id="BC007380">
    <property type="protein sequence ID" value="AAH07380.2"/>
    <property type="molecule type" value="mRNA"/>
</dbReference>
<dbReference type="EMBL" id="BC063415">
    <property type="protein sequence ID" value="AAH63415.1"/>
    <property type="molecule type" value="mRNA"/>
</dbReference>
<dbReference type="RefSeq" id="NP_071322.1">
    <property type="nucleotide sequence ID" value="NM_022039.3"/>
</dbReference>
<dbReference type="SMR" id="P57775"/>
<dbReference type="BioGRID" id="112364">
    <property type="interactions" value="59"/>
</dbReference>
<dbReference type="ComplexPortal" id="CPX-7761">
    <property type="entry name" value="SCF E3 ubiquitin ligase complex, FBXW4 variant"/>
</dbReference>
<dbReference type="DIP" id="DIP-41762N"/>
<dbReference type="FunCoup" id="P57775">
    <property type="interactions" value="170"/>
</dbReference>
<dbReference type="IntAct" id="P57775">
    <property type="interactions" value="27"/>
</dbReference>
<dbReference type="MINT" id="P57775"/>
<dbReference type="STRING" id="9606.ENSP00000499522"/>
<dbReference type="GlyGen" id="P57775">
    <property type="glycosylation" value="1 site, 1 O-linked glycan (1 site)"/>
</dbReference>
<dbReference type="iPTMnet" id="P57775"/>
<dbReference type="MetOSite" id="P57775"/>
<dbReference type="PhosphoSitePlus" id="P57775"/>
<dbReference type="BioMuta" id="FBXW4"/>
<dbReference type="DMDM" id="13124191"/>
<dbReference type="jPOST" id="P57775"/>
<dbReference type="MassIVE" id="P57775"/>
<dbReference type="PaxDb" id="9606-ENSP00000359149"/>
<dbReference type="PeptideAtlas" id="P57775"/>
<dbReference type="ProteomicsDB" id="57037"/>
<dbReference type="Pumba" id="P57775"/>
<dbReference type="Antibodypedia" id="31311">
    <property type="antibodies" value="231 antibodies from 27 providers"/>
</dbReference>
<dbReference type="DNASU" id="6468"/>
<dbReference type="Ensembl" id="ENST00000664783.1">
    <property type="protein sequence ID" value="ENSP00000499522.1"/>
    <property type="gene ID" value="ENSG00000107829.15"/>
</dbReference>
<dbReference type="GeneID" id="6468"/>
<dbReference type="KEGG" id="hsa:6468"/>
<dbReference type="UCSC" id="uc001kto.4">
    <property type="organism name" value="human"/>
</dbReference>
<dbReference type="AGR" id="HGNC:10847"/>
<dbReference type="CTD" id="6468"/>
<dbReference type="DisGeNET" id="6468"/>
<dbReference type="GeneCards" id="FBXW4"/>
<dbReference type="HGNC" id="HGNC:10847">
    <property type="gene designation" value="FBXW4"/>
</dbReference>
<dbReference type="HPA" id="ENSG00000107829">
    <property type="expression patterns" value="Low tissue specificity"/>
</dbReference>
<dbReference type="MalaCards" id="FBXW4"/>
<dbReference type="MIM" id="246560">
    <property type="type" value="phenotype"/>
</dbReference>
<dbReference type="MIM" id="608071">
    <property type="type" value="gene"/>
</dbReference>
<dbReference type="neXtProt" id="NX_P57775"/>
<dbReference type="OpenTargets" id="ENSG00000107829"/>
<dbReference type="Orphanet" id="2440">
    <property type="disease" value="Isolated split hand-split foot malformation"/>
</dbReference>
<dbReference type="PharmGKB" id="PA35751"/>
<dbReference type="VEuPathDB" id="HostDB:ENSG00000107829"/>
<dbReference type="eggNOG" id="ENOG502QV15">
    <property type="taxonomic scope" value="Eukaryota"/>
</dbReference>
<dbReference type="GeneTree" id="ENSGT00390000005029"/>
<dbReference type="HOGENOM" id="CLU_034660_0_0_1"/>
<dbReference type="InParanoid" id="P57775"/>
<dbReference type="OrthoDB" id="435188at2759"/>
<dbReference type="PAN-GO" id="P57775">
    <property type="GO annotations" value="2 GO annotations based on evolutionary models"/>
</dbReference>
<dbReference type="PhylomeDB" id="P57775"/>
<dbReference type="TreeFam" id="TF325020"/>
<dbReference type="PathwayCommons" id="P57775"/>
<dbReference type="Reactome" id="R-HSA-390471">
    <property type="pathway name" value="Association of TriC/CCT with target proteins during biosynthesis"/>
</dbReference>
<dbReference type="Reactome" id="R-HSA-8951664">
    <property type="pathway name" value="Neddylation"/>
</dbReference>
<dbReference type="Reactome" id="R-HSA-983168">
    <property type="pathway name" value="Antigen processing: Ubiquitination &amp; Proteasome degradation"/>
</dbReference>
<dbReference type="SignaLink" id="P57775"/>
<dbReference type="BioGRID-ORCS" id="6468">
    <property type="hits" value="12 hits in 1194 CRISPR screens"/>
</dbReference>
<dbReference type="ChiTaRS" id="FBXW4">
    <property type="organism name" value="human"/>
</dbReference>
<dbReference type="GeneWiki" id="FBXW4"/>
<dbReference type="GenomeRNAi" id="6468"/>
<dbReference type="Pharos" id="P57775">
    <property type="development level" value="Tbio"/>
</dbReference>
<dbReference type="PRO" id="PR:P57775"/>
<dbReference type="Proteomes" id="UP000005640">
    <property type="component" value="Chromosome 10"/>
</dbReference>
<dbReference type="RNAct" id="P57775">
    <property type="molecule type" value="protein"/>
</dbReference>
<dbReference type="Bgee" id="ENSG00000107829">
    <property type="expression patterns" value="Expressed in C1 segment of cervical spinal cord and 199 other cell types or tissues"/>
</dbReference>
<dbReference type="ExpressionAtlas" id="P57775">
    <property type="expression patterns" value="baseline and differential"/>
</dbReference>
<dbReference type="GO" id="GO:0005829">
    <property type="term" value="C:cytosol"/>
    <property type="evidence" value="ECO:0000304"/>
    <property type="project" value="Reactome"/>
</dbReference>
<dbReference type="GO" id="GO:0019005">
    <property type="term" value="C:SCF ubiquitin ligase complex"/>
    <property type="evidence" value="ECO:0000318"/>
    <property type="project" value="GO_Central"/>
</dbReference>
<dbReference type="GO" id="GO:0000151">
    <property type="term" value="C:ubiquitin ligase complex"/>
    <property type="evidence" value="ECO:0000303"/>
    <property type="project" value="UniProtKB"/>
</dbReference>
<dbReference type="GO" id="GO:0030326">
    <property type="term" value="P:embryonic limb morphogenesis"/>
    <property type="evidence" value="ECO:0000303"/>
    <property type="project" value="UniProtKB"/>
</dbReference>
<dbReference type="GO" id="GO:0031146">
    <property type="term" value="P:SCF-dependent proteasomal ubiquitin-dependent protein catabolic process"/>
    <property type="evidence" value="ECO:0000318"/>
    <property type="project" value="GO_Central"/>
</dbReference>
<dbReference type="GO" id="GO:0006511">
    <property type="term" value="P:ubiquitin-dependent protein catabolic process"/>
    <property type="evidence" value="ECO:0000303"/>
    <property type="project" value="UniProtKB"/>
</dbReference>
<dbReference type="GO" id="GO:0016055">
    <property type="term" value="P:Wnt signaling pathway"/>
    <property type="evidence" value="ECO:0007669"/>
    <property type="project" value="UniProtKB-KW"/>
</dbReference>
<dbReference type="CDD" id="cd20090">
    <property type="entry name" value="F-box_FBXW4"/>
    <property type="match status" value="1"/>
</dbReference>
<dbReference type="FunFam" id="2.130.10.10:FF:000376">
    <property type="entry name" value="F-box and WD repeat domain containing 4"/>
    <property type="match status" value="1"/>
</dbReference>
<dbReference type="FunFam" id="1.20.1280.50:FF:000031">
    <property type="entry name" value="F-box/WD repeat-containing protein 4 isoform X1"/>
    <property type="match status" value="1"/>
</dbReference>
<dbReference type="FunFam" id="2.130.10.10:FF:000327">
    <property type="entry name" value="F-box/WD repeat-containing protein 4 isoform X1"/>
    <property type="match status" value="1"/>
</dbReference>
<dbReference type="Gene3D" id="1.20.1280.50">
    <property type="match status" value="1"/>
</dbReference>
<dbReference type="Gene3D" id="2.130.10.10">
    <property type="entry name" value="YVTN repeat-like/Quinoprotein amine dehydrogenase"/>
    <property type="match status" value="2"/>
</dbReference>
<dbReference type="InterPro" id="IPR036047">
    <property type="entry name" value="F-box-like_dom_sf"/>
</dbReference>
<dbReference type="InterPro" id="IPR001810">
    <property type="entry name" value="F-box_dom"/>
</dbReference>
<dbReference type="InterPro" id="IPR052301">
    <property type="entry name" value="SCF_F-box/WD-repeat"/>
</dbReference>
<dbReference type="InterPro" id="IPR015943">
    <property type="entry name" value="WD40/YVTN_repeat-like_dom_sf"/>
</dbReference>
<dbReference type="InterPro" id="IPR036322">
    <property type="entry name" value="WD40_repeat_dom_sf"/>
</dbReference>
<dbReference type="InterPro" id="IPR001680">
    <property type="entry name" value="WD40_rpt"/>
</dbReference>
<dbReference type="PANTHER" id="PTHR14381">
    <property type="entry name" value="DACTYLIN"/>
    <property type="match status" value="1"/>
</dbReference>
<dbReference type="PANTHER" id="PTHR14381:SF1">
    <property type="entry name" value="F-BOX_WD REPEAT-CONTAINING PROTEIN 4"/>
    <property type="match status" value="1"/>
</dbReference>
<dbReference type="Pfam" id="PF12937">
    <property type="entry name" value="F-box-like"/>
    <property type="match status" value="1"/>
</dbReference>
<dbReference type="Pfam" id="PF00400">
    <property type="entry name" value="WD40"/>
    <property type="match status" value="2"/>
</dbReference>
<dbReference type="SMART" id="SM00320">
    <property type="entry name" value="WD40"/>
    <property type="match status" value="5"/>
</dbReference>
<dbReference type="SUPFAM" id="SSF81383">
    <property type="entry name" value="F-box domain"/>
    <property type="match status" value="1"/>
</dbReference>
<dbReference type="SUPFAM" id="SSF50978">
    <property type="entry name" value="WD40 repeat-like"/>
    <property type="match status" value="1"/>
</dbReference>
<dbReference type="PROSITE" id="PS50181">
    <property type="entry name" value="FBOX"/>
    <property type="match status" value="1"/>
</dbReference>
<dbReference type="PROSITE" id="PS50082">
    <property type="entry name" value="WD_REPEATS_2"/>
    <property type="match status" value="1"/>
</dbReference>
<dbReference type="PROSITE" id="PS50294">
    <property type="entry name" value="WD_REPEATS_REGION"/>
    <property type="match status" value="1"/>
</dbReference>
<accession>P57775</accession>
<accession>Q5SVS1</accession>
<accession>Q96IM6</accession>
<proteinExistence type="evidence at protein level"/>
<keyword id="KW-0217">Developmental protein</keyword>
<keyword id="KW-1267">Proteomics identification</keyword>
<keyword id="KW-1185">Reference proteome</keyword>
<keyword id="KW-0677">Repeat</keyword>
<keyword id="KW-0833">Ubl conjugation pathway</keyword>
<keyword id="KW-0853">WD repeat</keyword>
<keyword id="KW-0879">Wnt signaling pathway</keyword>
<comment type="function">
    <text>Probably recognizes and binds to some phosphorylated proteins and promotes their ubiquitination and degradation. Likely to be involved in key signaling pathways crucial for normal limb development. May participate in Wnt signaling.</text>
</comment>
<comment type="subunit">
    <text evidence="1 5">Part of a SCF (SKP1-cullin-F-box) protein ligase complex (Probable). Interacts with POUF51 (By similarity).</text>
</comment>
<comment type="interaction">
    <interactant intactId="EBI-2372268">
        <id>P57775</id>
    </interactant>
    <interactant intactId="EBI-21251460">
        <id>O60260-5</id>
        <label>PRKN</label>
    </interactant>
    <organismsDiffer>false</organismsDiffer>
    <experiments>3</experiments>
</comment>
<comment type="interaction">
    <interactant intactId="EBI-2372268">
        <id>P57775</id>
    </interactant>
    <interactant intactId="EBI-307486">
        <id>P63208</id>
        <label>SKP1</label>
    </interactant>
    <organismsDiffer>false</organismsDiffer>
    <experiments>3</experiments>
</comment>
<comment type="tissue specificity">
    <text evidence="3">Expressed in brain, kidney, lung and liver.</text>
</comment>
<comment type="disease" evidence="4">
    <disease id="DI-02327">
        <name>Split-hand/foot malformation 3</name>
        <acronym>SHFM3</acronym>
        <description>A limb malformation involving the central rays of the autopod and presenting with syndactyly, median clefts of the hands and feet, and aplasia and/or hypoplasia of the phalanges, metacarpals, and metatarsals. Some patients have been found to have intellectual disability, ectodermal and craniofacial findings, and orofacial clefting.</description>
        <dbReference type="MIM" id="246560"/>
    </disease>
    <text>The disease is caused by variants affecting the gene represented in this entry.</text>
</comment>
<protein>
    <recommendedName>
        <fullName>F-box/WD repeat-containing protein 4</fullName>
    </recommendedName>
    <alternativeName>
        <fullName>Dactylin</fullName>
    </alternativeName>
    <alternativeName>
        <fullName>F-box and WD-40 domain-containing protein 4</fullName>
    </alternativeName>
</protein>